<keyword id="KW-0963">Cytoplasm</keyword>
<keyword id="KW-0903">Direct protein sequencing</keyword>
<keyword id="KW-0275">Fatty acid biosynthesis</keyword>
<keyword id="KW-0276">Fatty acid metabolism</keyword>
<keyword id="KW-0444">Lipid biosynthesis</keyword>
<keyword id="KW-0443">Lipid metabolism</keyword>
<keyword id="KW-0596">Phosphopantetheine</keyword>
<sequence length="25" mass="2770">MESIEQRVKKIVAEQLGVAEAEIKA</sequence>
<gene>
    <name type="primary">acpP</name>
</gene>
<proteinExistence type="evidence at protein level"/>
<dbReference type="SMR" id="P80917"/>
<dbReference type="STRING" id="511.UZ73_03320"/>
<dbReference type="eggNOG" id="COG0236">
    <property type="taxonomic scope" value="Bacteria"/>
</dbReference>
<dbReference type="UniPathway" id="UPA00094"/>
<dbReference type="GO" id="GO:0005737">
    <property type="term" value="C:cytoplasm"/>
    <property type="evidence" value="ECO:0007669"/>
    <property type="project" value="UniProtKB-SubCell"/>
</dbReference>
<dbReference type="GO" id="GO:0006633">
    <property type="term" value="P:fatty acid biosynthetic process"/>
    <property type="evidence" value="ECO:0007669"/>
    <property type="project" value="UniProtKB-UniPathway"/>
</dbReference>
<dbReference type="InterPro" id="IPR009081">
    <property type="entry name" value="PP-bd_ACP"/>
</dbReference>
<dbReference type="PROSITE" id="PS50075">
    <property type="entry name" value="CARRIER"/>
    <property type="match status" value="1"/>
</dbReference>
<accession>P80917</accession>
<organism>
    <name type="scientific">Alcaligenes faecalis</name>
    <dbReference type="NCBI Taxonomy" id="511"/>
    <lineage>
        <taxon>Bacteria</taxon>
        <taxon>Pseudomonadati</taxon>
        <taxon>Pseudomonadota</taxon>
        <taxon>Betaproteobacteria</taxon>
        <taxon>Burkholderiales</taxon>
        <taxon>Alcaligenaceae</taxon>
        <taxon>Alcaligenes</taxon>
    </lineage>
</organism>
<feature type="chain" id="PRO_0000180091" description="Acyl carrier protein">
    <location>
        <begin position="1"/>
        <end position="25" status="greater than"/>
    </location>
</feature>
<feature type="domain" description="Carrier" evidence="2">
    <location>
        <begin position="2"/>
        <end position="25" status="greater than"/>
    </location>
</feature>
<feature type="non-terminal residue">
    <location>
        <position position="25"/>
    </location>
</feature>
<evidence type="ECO:0000250" key="1"/>
<evidence type="ECO:0000255" key="2">
    <source>
        <dbReference type="PROSITE-ProRule" id="PRU00258"/>
    </source>
</evidence>
<evidence type="ECO:0000305" key="3"/>
<comment type="function">
    <text>Carrier of the growing fatty acid chain in fatty acid biosynthesis.</text>
</comment>
<comment type="pathway">
    <text>Lipid metabolism; fatty acid biosynthesis.</text>
</comment>
<comment type="subcellular location">
    <subcellularLocation>
        <location evidence="1">Cytoplasm</location>
    </subcellularLocation>
</comment>
<comment type="PTM">
    <text>4'-phosphopantetheine is transferred from CoA to a specific serine of apo-ACP by AcpS. This modification is essential for activity because fatty acids are bound in thioester linkage to the sulfhydryl of the prosthetic group.</text>
</comment>
<comment type="similarity">
    <text evidence="3">Belongs to the acyl carrier protein (ACP) family.</text>
</comment>
<reference key="1">
    <citation type="journal article" date="1997" name="J. Bacteriol.">
        <title>Domains of Escherichia coli acyl carrier protein important for membrane-derived-oligosaccharide biosynthesis.</title>
        <authorList>
            <person name="Tang L."/>
            <person name="Weissborn A.C."/>
            <person name="Kennedy E.P."/>
        </authorList>
    </citation>
    <scope>PROTEIN SEQUENCE</scope>
    <source>
        <strain>ATCC 8750 / DSM 30030 / CCUG 1814 / LMG 1229 / NBRC 13111 / NCIMB 8156 / NCTC 11953 / Conn 16</strain>
    </source>
</reference>
<protein>
    <recommendedName>
        <fullName>Acyl carrier protein</fullName>
        <shortName>ACP</shortName>
    </recommendedName>
</protein>
<name>ACP_ALCFA</name>